<accession>B6J5E8</accession>
<evidence type="ECO:0000255" key="1">
    <source>
        <dbReference type="HAMAP-Rule" id="MF_01337"/>
    </source>
</evidence>
<evidence type="ECO:0000305" key="2"/>
<dbReference type="EMBL" id="CP001020">
    <property type="protein sequence ID" value="ACJ19732.1"/>
    <property type="molecule type" value="Genomic_DNA"/>
</dbReference>
<dbReference type="RefSeq" id="WP_005771517.1">
    <property type="nucleotide sequence ID" value="NC_011528.1"/>
</dbReference>
<dbReference type="SMR" id="B6J5E8"/>
<dbReference type="KEGG" id="cbc:CbuK_0449"/>
<dbReference type="HOGENOM" id="CLU_098841_0_1_6"/>
<dbReference type="GO" id="GO:0022625">
    <property type="term" value="C:cytosolic large ribosomal subunit"/>
    <property type="evidence" value="ECO:0007669"/>
    <property type="project" value="TreeGrafter"/>
</dbReference>
<dbReference type="GO" id="GO:0008097">
    <property type="term" value="F:5S rRNA binding"/>
    <property type="evidence" value="ECO:0007669"/>
    <property type="project" value="TreeGrafter"/>
</dbReference>
<dbReference type="GO" id="GO:0003735">
    <property type="term" value="F:structural constituent of ribosome"/>
    <property type="evidence" value="ECO:0007669"/>
    <property type="project" value="InterPro"/>
</dbReference>
<dbReference type="GO" id="GO:0006412">
    <property type="term" value="P:translation"/>
    <property type="evidence" value="ECO:0007669"/>
    <property type="project" value="UniProtKB-UniRule"/>
</dbReference>
<dbReference type="CDD" id="cd00432">
    <property type="entry name" value="Ribosomal_L18_L5e"/>
    <property type="match status" value="1"/>
</dbReference>
<dbReference type="FunFam" id="3.30.420.100:FF:000001">
    <property type="entry name" value="50S ribosomal protein L18"/>
    <property type="match status" value="1"/>
</dbReference>
<dbReference type="Gene3D" id="3.30.420.100">
    <property type="match status" value="1"/>
</dbReference>
<dbReference type="HAMAP" id="MF_01337_B">
    <property type="entry name" value="Ribosomal_uL18_B"/>
    <property type="match status" value="1"/>
</dbReference>
<dbReference type="InterPro" id="IPR004389">
    <property type="entry name" value="Ribosomal_uL18_bac-type"/>
</dbReference>
<dbReference type="InterPro" id="IPR005484">
    <property type="entry name" value="Ribosomal_uL18_bac/euk"/>
</dbReference>
<dbReference type="NCBIfam" id="TIGR00060">
    <property type="entry name" value="L18_bact"/>
    <property type="match status" value="1"/>
</dbReference>
<dbReference type="PANTHER" id="PTHR12899">
    <property type="entry name" value="39S RIBOSOMAL PROTEIN L18, MITOCHONDRIAL"/>
    <property type="match status" value="1"/>
</dbReference>
<dbReference type="PANTHER" id="PTHR12899:SF3">
    <property type="entry name" value="LARGE RIBOSOMAL SUBUNIT PROTEIN UL18M"/>
    <property type="match status" value="1"/>
</dbReference>
<dbReference type="Pfam" id="PF00861">
    <property type="entry name" value="Ribosomal_L18p"/>
    <property type="match status" value="1"/>
</dbReference>
<dbReference type="SUPFAM" id="SSF53137">
    <property type="entry name" value="Translational machinery components"/>
    <property type="match status" value="1"/>
</dbReference>
<protein>
    <recommendedName>
        <fullName evidence="1">Large ribosomal subunit protein uL18</fullName>
    </recommendedName>
    <alternativeName>
        <fullName evidence="2">50S ribosomal protein L18</fullName>
    </alternativeName>
</protein>
<sequence length="117" mass="13106">MDKQEKRIRRARRTRAKIKELGAVRLCVHRSLNHIYAQLISPRDSKVLVCASTLEKEVRSQIKHGGNIQAATAIGKLIAQRAKKAGVTKVAFDRSGYKYHGRVRALAEAVREGGIEF</sequence>
<reference key="1">
    <citation type="journal article" date="2009" name="Infect. Immun.">
        <title>Comparative genomics reveal extensive transposon-mediated genomic plasticity and diversity among potential effector proteins within the genus Coxiella.</title>
        <authorList>
            <person name="Beare P.A."/>
            <person name="Unsworth N."/>
            <person name="Andoh M."/>
            <person name="Voth D.E."/>
            <person name="Omsland A."/>
            <person name="Gilk S.D."/>
            <person name="Williams K.P."/>
            <person name="Sobral B.W."/>
            <person name="Kupko J.J. III"/>
            <person name="Porcella S.F."/>
            <person name="Samuel J.E."/>
            <person name="Heinzen R.A."/>
        </authorList>
    </citation>
    <scope>NUCLEOTIDE SEQUENCE [LARGE SCALE GENOMIC DNA]</scope>
    <source>
        <strain>CbuK_Q154</strain>
    </source>
</reference>
<keyword id="KW-0687">Ribonucleoprotein</keyword>
<keyword id="KW-0689">Ribosomal protein</keyword>
<keyword id="KW-0694">RNA-binding</keyword>
<keyword id="KW-0699">rRNA-binding</keyword>
<feature type="chain" id="PRO_1000142646" description="Large ribosomal subunit protein uL18">
    <location>
        <begin position="1"/>
        <end position="117"/>
    </location>
</feature>
<comment type="function">
    <text evidence="1">This is one of the proteins that bind and probably mediate the attachment of the 5S RNA into the large ribosomal subunit, where it forms part of the central protuberance.</text>
</comment>
<comment type="subunit">
    <text evidence="1">Part of the 50S ribosomal subunit; part of the 5S rRNA/L5/L18/L25 subcomplex. Contacts the 5S and 23S rRNAs.</text>
</comment>
<comment type="similarity">
    <text evidence="1">Belongs to the universal ribosomal protein uL18 family.</text>
</comment>
<proteinExistence type="inferred from homology"/>
<name>RL18_COXB1</name>
<gene>
    <name evidence="1" type="primary">rplR</name>
    <name type="ordered locus">CbuK_0449</name>
</gene>
<organism>
    <name type="scientific">Coxiella burnetii (strain CbuK_Q154)</name>
    <name type="common">Coxiella burnetii (strain Q154)</name>
    <dbReference type="NCBI Taxonomy" id="434924"/>
    <lineage>
        <taxon>Bacteria</taxon>
        <taxon>Pseudomonadati</taxon>
        <taxon>Pseudomonadota</taxon>
        <taxon>Gammaproteobacteria</taxon>
        <taxon>Legionellales</taxon>
        <taxon>Coxiellaceae</taxon>
        <taxon>Coxiella</taxon>
    </lineage>
</organism>